<keyword id="KW-0175">Coiled coil</keyword>
<keyword id="KW-0325">Glycoprotein</keyword>
<keyword id="KW-1043">Host membrane</keyword>
<keyword id="KW-0945">Host-virus interaction</keyword>
<keyword id="KW-0472">Membrane</keyword>
<keyword id="KW-0732">Signal</keyword>
<keyword id="KW-0812">Transmembrane</keyword>
<keyword id="KW-1133">Transmembrane helix</keyword>
<keyword id="KW-1161">Viral attachment to host cell</keyword>
<keyword id="KW-0261">Viral envelope protein</keyword>
<keyword id="KW-0946">Virion</keyword>
<keyword id="KW-0843">Virulence</keyword>
<keyword id="KW-1160">Virus entry into host cell</keyword>
<reference key="1">
    <citation type="journal article" date="2006" name="J. Virol.">
        <title>Prevalence and genetic diversity of coronaviruses in bats from China.</title>
        <authorList>
            <person name="Tang X.C."/>
            <person name="Zhang J.X."/>
            <person name="Zhang S.Y."/>
            <person name="Wang P."/>
            <person name="Fan X.H."/>
            <person name="Li L.F."/>
            <person name="Li G."/>
            <person name="Dong B.Q."/>
            <person name="Liu W."/>
            <person name="Cheung C.L."/>
            <person name="Xu K.M."/>
            <person name="Song W.J."/>
            <person name="Vijaykrishna D."/>
            <person name="Poon L.L.M."/>
            <person name="Peiris J.S.M."/>
            <person name="Smith G.J."/>
            <person name="Chen H."/>
            <person name="Guan Y."/>
        </authorList>
    </citation>
    <scope>NUCLEOTIDE SEQUENCE [GENOMIC RNA]</scope>
</reference>
<comment type="function">
    <text evidence="1">S1 region attaches the virion to the cell membrane by interacting with host ANPEP/aminopeptidase N, initiating the infection. Binding to the receptor probably induces conformational changes in the S glycoprotein unmasking the fusion peptide of S2 region and activating membranes fusion. S2 region belongs to the class I viral fusion protein. Under the current model, the protein has at least 3 conformational states: pre-fusion native state, pre-hairpin intermediate state, and post-fusion hairpin state. During viral and target cell membrane fusion, the coiled coil regions (heptad repeats) regions assume a trimer-of-hairpins structure, positioning the fusion peptide in close proximity to the C-terminal region of the ectodomain. The formation of this structure appears to drive apposition and subsequent fusion of viral and target cell membranes.</text>
</comment>
<comment type="subunit">
    <text evidence="1">Homotrimer. During virus morphogenesis, found in a complex with M and HE proteins. Interacts with host ANPEP.</text>
</comment>
<comment type="subcellular location">
    <subcellularLocation>
        <location evidence="1">Virion membrane</location>
        <topology evidence="1">Single-pass type I membrane protein</topology>
    </subcellularLocation>
    <subcellularLocation>
        <location evidence="1">Host endoplasmic reticulum-Golgi intermediate compartment membrane</location>
        <topology evidence="1">Single-pass type I membrane protein</topology>
    </subcellularLocation>
    <text evidence="1">Accumulates in the endoplasmic reticulum-Golgi intermediate compartment, where it participates in virus particle assembly.</text>
</comment>
<comment type="domain">
    <text evidence="1">The KxHxx motif seems to function as an ER retrieval signal.</text>
</comment>
<comment type="miscellaneous">
    <text>Bat coronavirus 512/2005 is highly similar to porcine epidemic diarrhea virus (PEDV).</text>
</comment>
<comment type="similarity">
    <text evidence="1">Belongs to the alphacoronaviruses spike protein family.</text>
</comment>
<comment type="caution">
    <text evidence="1">In contrast to beta- and gammacoronaviruses, S glycoprotein is not cleaved into S1 and S2.</text>
</comment>
<dbReference type="EMBL" id="DQ648858">
    <property type="protein sequence ID" value="ABG47078.1"/>
    <property type="molecule type" value="Genomic_RNA"/>
</dbReference>
<dbReference type="RefSeq" id="YP_001351684.1">
    <property type="nucleotide sequence ID" value="NC_009657.1"/>
</dbReference>
<dbReference type="SMR" id="Q0Q466"/>
<dbReference type="KEGG" id="vg:11266523"/>
<dbReference type="Proteomes" id="UP000113079">
    <property type="component" value="Genome"/>
</dbReference>
<dbReference type="GO" id="GO:0044173">
    <property type="term" value="C:host cell endoplasmic reticulum-Golgi intermediate compartment membrane"/>
    <property type="evidence" value="ECO:0007669"/>
    <property type="project" value="UniProtKB-SubCell"/>
</dbReference>
<dbReference type="GO" id="GO:0016020">
    <property type="term" value="C:membrane"/>
    <property type="evidence" value="ECO:0007669"/>
    <property type="project" value="UniProtKB-UniRule"/>
</dbReference>
<dbReference type="GO" id="GO:0019031">
    <property type="term" value="C:viral envelope"/>
    <property type="evidence" value="ECO:0007669"/>
    <property type="project" value="UniProtKB-UniRule"/>
</dbReference>
<dbReference type="GO" id="GO:0055036">
    <property type="term" value="C:virion membrane"/>
    <property type="evidence" value="ECO:0007669"/>
    <property type="project" value="UniProtKB-SubCell"/>
</dbReference>
<dbReference type="GO" id="GO:0075509">
    <property type="term" value="P:endocytosis involved in viral entry into host cell"/>
    <property type="evidence" value="ECO:0007669"/>
    <property type="project" value="UniProtKB-UniRule"/>
</dbReference>
<dbReference type="GO" id="GO:0039654">
    <property type="term" value="P:fusion of virus membrane with host endosome membrane"/>
    <property type="evidence" value="ECO:0007669"/>
    <property type="project" value="UniProtKB-UniRule"/>
</dbReference>
<dbReference type="GO" id="GO:0019064">
    <property type="term" value="P:fusion of virus membrane with host plasma membrane"/>
    <property type="evidence" value="ECO:0007669"/>
    <property type="project" value="UniProtKB-UniRule"/>
</dbReference>
<dbReference type="GO" id="GO:0046813">
    <property type="term" value="P:receptor-mediated virion attachment to host cell"/>
    <property type="evidence" value="ECO:0007669"/>
    <property type="project" value="UniProtKB-UniRule"/>
</dbReference>
<dbReference type="CDD" id="cd22376">
    <property type="entry name" value="PDEV-like_Spike_SD1-2_S1-2_S2"/>
    <property type="match status" value="1"/>
</dbReference>
<dbReference type="Gene3D" id="1.20.5.300">
    <property type="match status" value="2"/>
</dbReference>
<dbReference type="Gene3D" id="2.60.40.3130">
    <property type="match status" value="1"/>
</dbReference>
<dbReference type="HAMAP" id="MF_04200">
    <property type="entry name" value="ALPHA_CORONA_SPIKE"/>
    <property type="match status" value="1"/>
</dbReference>
<dbReference type="InterPro" id="IPR042552">
    <property type="entry name" value="ALPHA_CORONA_SPIKE"/>
</dbReference>
<dbReference type="InterPro" id="IPR043607">
    <property type="entry name" value="CoV_S1_C"/>
</dbReference>
<dbReference type="InterPro" id="IPR043473">
    <property type="entry name" value="S2_sf_CoV"/>
</dbReference>
<dbReference type="InterPro" id="IPR002551">
    <property type="entry name" value="Spike_S1_CoV"/>
</dbReference>
<dbReference type="InterPro" id="IPR002552">
    <property type="entry name" value="Spike_S2_CoV"/>
</dbReference>
<dbReference type="InterPro" id="IPR043614">
    <property type="entry name" value="Spike_S2_CoV_C"/>
</dbReference>
<dbReference type="InterPro" id="IPR044873">
    <property type="entry name" value="Spike_S2_CoV_HR1"/>
</dbReference>
<dbReference type="InterPro" id="IPR044874">
    <property type="entry name" value="Spike_S2_CoV_HR2"/>
</dbReference>
<dbReference type="Pfam" id="PF01600">
    <property type="entry name" value="CoV_S1"/>
    <property type="match status" value="1"/>
</dbReference>
<dbReference type="Pfam" id="PF19209">
    <property type="entry name" value="CoV_S1_C"/>
    <property type="match status" value="1"/>
</dbReference>
<dbReference type="Pfam" id="PF01601">
    <property type="entry name" value="CoV_S2"/>
    <property type="match status" value="1"/>
</dbReference>
<dbReference type="Pfam" id="PF19214">
    <property type="entry name" value="CoV_S2_C"/>
    <property type="match status" value="1"/>
</dbReference>
<dbReference type="SUPFAM" id="SSF111474">
    <property type="entry name" value="Coronavirus S2 glycoprotein"/>
    <property type="match status" value="2"/>
</dbReference>
<dbReference type="PROSITE" id="PS51923">
    <property type="entry name" value="COV_S2_HR1"/>
    <property type="match status" value="1"/>
</dbReference>
<dbReference type="PROSITE" id="PS51924">
    <property type="entry name" value="COV_S2_HR2"/>
    <property type="match status" value="1"/>
</dbReference>
<organismHost>
    <name type="scientific">Scotophilus kuhlii</name>
    <name type="common">Lesser asiatic yellow bat</name>
    <dbReference type="NCBI Taxonomy" id="153297"/>
</organismHost>
<feature type="signal peptide" evidence="1">
    <location>
        <begin position="1"/>
        <end position="23"/>
    </location>
</feature>
<feature type="chain" id="PRO_0000289929" description="Spike glycoprotein" evidence="1">
    <location>
        <begin position="24"/>
        <end position="1371"/>
    </location>
</feature>
<feature type="topological domain" description="Virion surface" evidence="1">
    <location>
        <begin position="24"/>
        <end position="1312"/>
    </location>
</feature>
<feature type="transmembrane region" description="Helical" evidence="1">
    <location>
        <begin position="1313"/>
        <end position="1332"/>
    </location>
</feature>
<feature type="topological domain" description="Intravirion" evidence="1">
    <location>
        <begin position="1333"/>
        <end position="1371"/>
    </location>
</feature>
<feature type="region of interest" description="S1" evidence="1">
    <location>
        <begin position="24"/>
        <end position="737"/>
    </location>
</feature>
<feature type="region of interest" description="Interaction with host ANPEP" evidence="1">
    <location>
        <begin position="619"/>
        <end position="748"/>
    </location>
</feature>
<feature type="region of interest" description="S2" evidence="1">
    <location>
        <begin position="738"/>
        <end position="1371"/>
    </location>
</feature>
<feature type="region of interest" description="Fusion peptide" evidence="1">
    <location>
        <begin position="949"/>
        <end position="969"/>
    </location>
</feature>
<feature type="region of interest" description="Heptad repeat 1 (HR1)" evidence="2">
    <location>
        <begin position="963"/>
        <end position="1082"/>
    </location>
</feature>
<feature type="region of interest" description="Heptad repeat 2 (HR2)" evidence="3">
    <location>
        <begin position="1228"/>
        <end position="1324"/>
    </location>
</feature>
<feature type="coiled-coil region" evidence="1">
    <location>
        <begin position="1030"/>
        <end position="1074"/>
    </location>
</feature>
<feature type="coiled-coil region" evidence="1">
    <location>
        <begin position="1260"/>
        <end position="1302"/>
    </location>
</feature>
<feature type="short sequence motif" description="KxHxx" evidence="1">
    <location>
        <begin position="1367"/>
        <end position="1371"/>
    </location>
</feature>
<evidence type="ECO:0000255" key="1">
    <source>
        <dbReference type="HAMAP-Rule" id="MF_04200"/>
    </source>
</evidence>
<evidence type="ECO:0000255" key="2">
    <source>
        <dbReference type="PROSITE-ProRule" id="PRU01271"/>
    </source>
</evidence>
<evidence type="ECO:0000255" key="3">
    <source>
        <dbReference type="PROSITE-ProRule" id="PRU01272"/>
    </source>
</evidence>
<gene>
    <name evidence="1" type="primary">S</name>
    <name type="ORF">2</name>
</gene>
<proteinExistence type="inferred from homology"/>
<sequence>MKYTLLFCVVFATVSFGFADNERCNKTVNLTRLFSKFDIQPPSQVVLAGLLPNQTAQWKCTTETNKRDEGVGVKGVFLSYVSSGRGFTIGVSQYNFDPSTYQLYLHRDTNGNSNAFAYLRICKWPSKKWLQSTSNMDTSGRFCLVNKKIPAAFTDHANMVVGITWDQDRVTFYTDKVYHFYVPNNRWSRVVSWCSAADSCAMQYINSTIYYNLNVTTPGPGGITYSVCTKHCTGLADNVFSTDQGGHIPPIFPYNNWFLLTNTSTLVQGVTRVFQPFLVNCLVALPKLQGLTTTLSFDSPLNVPGFSCNGANGSSSAEAFRFNVNDTKLFVGAGAVTLNTVDGVNVSIVCSNNATQPTRSNNLQEDLPYYCFTNTSSGTNHTVKFLSVFPPIIREFVITKYGNVYVNGYIYLRTRPLTAVHLNASSHSQDVAGFWTIAATNFTDVLVEVNNTGIQRLLYCDTPENSVKCSQLSFELEDGFYSMTADNVYAVTKPHTFVTLPTFNDHGFVNVTVGGNFDSSYPPKFTANGTLVNNGTVVCVTSNQFTLRHDFMVGYSADMRKGIFEYSSTCPFNRETINNYLTFGRICFSTSPADGACELKYYVWNTIGAVSHLAGTLYVQHTKGDIITGTPKPLQGLNDISELHLDTCTTYTIYGFRGDGVIRLTNQTFLSGVYYTSESGQLLAFKNVTTGQIYSVTPCQLVQQVAFVEDRIVGVISSANNTGFFNSTRTFPGFYYHSNDTTNCTSPRLVYSNIGVCTSGAIGLLSPKAAQPQVQPMFQGNISIPTNFTMSVRTEYIQLFNKPVSVDCAMYVCNGNDRCKQLLSQYTSACKNIESALQLSARLESMEVNSMLTVSDEALKLATISQFPGGGYNFTNILPANPGARSVIEDILFDKVVTSGLGTVDEDYKRCSNGLSIADLACAQHYNGIMVLPGVADWEKVHMYSASLVGGMTLGGITSAAALPFSYAVQARLNYVALQTDVLQRNQQMLANSFNSAISNITLAFESVNNAIYQTSAGLNTVAEALSKVQDVVNGQGNALSQLTVQLQNNFQAISNSIGDIYSRLDQITADAQVDRLITGRLAALNAFVAQSLTKYAEVQASRTLAKQKVNECVKSQSPRYGFCGDEGEHIFSLTQAAPQGLMFLHTVLVPNGFINVTAVTGLCVDETIAMTLRQSGFVLFVQNGNYLVSPRKMFEPRRPEVADFVQVKTCTISYVNITNNQLPDIIPDYVDVNKTIDEILANLPNNTVPDLPLDVFNQTFLNLTGEIADLEARSESLKNTSEELRQLIQNINNTLVDLQWLNRVETFIKWPWYVWLAIVIALILVVSLLVFCCISTGCCGCCGCCGSCFSGCCRGTKLQHYEPIEKVHVQ</sequence>
<accession>Q0Q466</accession>
<protein>
    <recommendedName>
        <fullName evidence="1">Spike glycoprotein</fullName>
        <shortName evidence="1">S glycoprotein</shortName>
    </recommendedName>
    <alternativeName>
        <fullName evidence="1">E2</fullName>
    </alternativeName>
    <alternativeName>
        <fullName evidence="1">Peplomer protein</fullName>
    </alternativeName>
</protein>
<name>SPIKE_BC512</name>
<organism>
    <name type="scientific">Bat coronavirus 512/2005</name>
    <name type="common">BtCoV</name>
    <name type="synonym">BtCoV/512/2005</name>
    <dbReference type="NCBI Taxonomy" id="693999"/>
    <lineage>
        <taxon>Viruses</taxon>
        <taxon>Riboviria</taxon>
        <taxon>Orthornavirae</taxon>
        <taxon>Pisuviricota</taxon>
        <taxon>Pisoniviricetes</taxon>
        <taxon>Nidovirales</taxon>
        <taxon>Cornidovirineae</taxon>
        <taxon>Coronaviridae</taxon>
        <taxon>Orthocoronavirinae</taxon>
        <taxon>Alphacoronavirus</taxon>
        <taxon>Pedacovirus</taxon>
        <taxon>Alphacoronavirus scotophili</taxon>
    </lineage>
</organism>